<reference key="1">
    <citation type="journal article" date="2003" name="Biochem. Biophys. Res. Commun.">
        <title>Molecular cloning and characterization of human, rat, and mouse synaptotagmin XV.</title>
        <authorList>
            <person name="Fukuda M."/>
        </authorList>
    </citation>
    <scope>NUCLEOTIDE SEQUENCE [MRNA]</scope>
    <source>
        <strain>Sprague-Dawley</strain>
        <tissue>Lung</tissue>
    </source>
</reference>
<dbReference type="EMBL" id="AB109021">
    <property type="protein sequence ID" value="BAC76816.1"/>
    <property type="molecule type" value="mRNA"/>
</dbReference>
<dbReference type="SMR" id="P59926"/>
<dbReference type="FunCoup" id="P59926">
    <property type="interactions" value="37"/>
</dbReference>
<dbReference type="STRING" id="10116.ENSRNOP00000075561"/>
<dbReference type="PhosphoSitePlus" id="P59926"/>
<dbReference type="PaxDb" id="10116-ENSRNOP00000027475"/>
<dbReference type="UCSC" id="RGD:727964">
    <property type="organism name" value="rat"/>
</dbReference>
<dbReference type="AGR" id="RGD:727964"/>
<dbReference type="RGD" id="727964">
    <property type="gene designation" value="Syt15"/>
</dbReference>
<dbReference type="eggNOG" id="KOG1028">
    <property type="taxonomic scope" value="Eukaryota"/>
</dbReference>
<dbReference type="InParanoid" id="P59926"/>
<dbReference type="OrthoDB" id="10259057at2759"/>
<dbReference type="PhylomeDB" id="P59926"/>
<dbReference type="PRO" id="PR:P59926"/>
<dbReference type="Proteomes" id="UP000002494">
    <property type="component" value="Unplaced"/>
</dbReference>
<dbReference type="GO" id="GO:0070382">
    <property type="term" value="C:exocytic vesicle"/>
    <property type="evidence" value="ECO:0000318"/>
    <property type="project" value="GO_Central"/>
</dbReference>
<dbReference type="GO" id="GO:0016020">
    <property type="term" value="C:membrane"/>
    <property type="evidence" value="ECO:0000266"/>
    <property type="project" value="RGD"/>
</dbReference>
<dbReference type="GO" id="GO:0005886">
    <property type="term" value="C:plasma membrane"/>
    <property type="evidence" value="ECO:0000318"/>
    <property type="project" value="GO_Central"/>
</dbReference>
<dbReference type="GO" id="GO:0061891">
    <property type="term" value="F:calcium ion sensor activity"/>
    <property type="evidence" value="ECO:0000318"/>
    <property type="project" value="GO_Central"/>
</dbReference>
<dbReference type="GO" id="GO:0005544">
    <property type="term" value="F:calcium-dependent phospholipid binding"/>
    <property type="evidence" value="ECO:0000318"/>
    <property type="project" value="GO_Central"/>
</dbReference>
<dbReference type="GO" id="GO:0000149">
    <property type="term" value="F:SNARE binding"/>
    <property type="evidence" value="ECO:0000318"/>
    <property type="project" value="GO_Central"/>
</dbReference>
<dbReference type="GO" id="GO:0017158">
    <property type="term" value="P:regulation of calcium ion-dependent exocytosis"/>
    <property type="evidence" value="ECO:0000318"/>
    <property type="project" value="GO_Central"/>
</dbReference>
<dbReference type="GO" id="GO:0016192">
    <property type="term" value="P:vesicle-mediated transport"/>
    <property type="evidence" value="ECO:0000318"/>
    <property type="project" value="GO_Central"/>
</dbReference>
<dbReference type="CDD" id="cd08390">
    <property type="entry name" value="C2A_Synaptotagmin-15-17"/>
    <property type="match status" value="1"/>
</dbReference>
<dbReference type="CDD" id="cd08409">
    <property type="entry name" value="C2B_Synaptotagmin-15"/>
    <property type="match status" value="1"/>
</dbReference>
<dbReference type="FunFam" id="2.60.40.150:FF:000161">
    <property type="entry name" value="Synaptotagmin 15"/>
    <property type="match status" value="1"/>
</dbReference>
<dbReference type="FunFam" id="2.60.40.150:FF:000162">
    <property type="entry name" value="Synaptotagmin-15"/>
    <property type="match status" value="1"/>
</dbReference>
<dbReference type="Gene3D" id="2.60.40.150">
    <property type="entry name" value="C2 domain"/>
    <property type="match status" value="2"/>
</dbReference>
<dbReference type="InterPro" id="IPR000008">
    <property type="entry name" value="C2_dom"/>
</dbReference>
<dbReference type="InterPro" id="IPR035892">
    <property type="entry name" value="C2_domain_sf"/>
</dbReference>
<dbReference type="InterPro" id="IPR047897">
    <property type="entry name" value="Synaptotagmin-15/17_C2A"/>
</dbReference>
<dbReference type="PANTHER" id="PTHR10024">
    <property type="entry name" value="SYNAPTOTAGMIN"/>
    <property type="match status" value="1"/>
</dbReference>
<dbReference type="PANTHER" id="PTHR10024:SF234">
    <property type="entry name" value="SYNAPTOTAGMIN-15-RELATED"/>
    <property type="match status" value="1"/>
</dbReference>
<dbReference type="Pfam" id="PF00168">
    <property type="entry name" value="C2"/>
    <property type="match status" value="2"/>
</dbReference>
<dbReference type="SMART" id="SM00239">
    <property type="entry name" value="C2"/>
    <property type="match status" value="2"/>
</dbReference>
<dbReference type="SUPFAM" id="SSF49562">
    <property type="entry name" value="C2 domain (Calcium/lipid-binding domain, CaLB)"/>
    <property type="match status" value="2"/>
</dbReference>
<dbReference type="PROSITE" id="PS50004">
    <property type="entry name" value="C2"/>
    <property type="match status" value="2"/>
</dbReference>
<organism>
    <name type="scientific">Rattus norvegicus</name>
    <name type="common">Rat</name>
    <dbReference type="NCBI Taxonomy" id="10116"/>
    <lineage>
        <taxon>Eukaryota</taxon>
        <taxon>Metazoa</taxon>
        <taxon>Chordata</taxon>
        <taxon>Craniata</taxon>
        <taxon>Vertebrata</taxon>
        <taxon>Euteleostomi</taxon>
        <taxon>Mammalia</taxon>
        <taxon>Eutheria</taxon>
        <taxon>Euarchontoglires</taxon>
        <taxon>Glires</taxon>
        <taxon>Rodentia</taxon>
        <taxon>Myomorpha</taxon>
        <taxon>Muroidea</taxon>
        <taxon>Muridae</taxon>
        <taxon>Murinae</taxon>
        <taxon>Rattus</taxon>
    </lineage>
</organism>
<comment type="function">
    <text evidence="1">May be involved in the trafficking and exocytosis of secretory vesicles in non-neuronal tissues.</text>
</comment>
<comment type="subunit">
    <text evidence="1">Homodimer.</text>
</comment>
<comment type="subcellular location">
    <subcellularLocation>
        <location evidence="1">Membrane</location>
        <topology evidence="1">Single-pass type III membrane protein</topology>
    </subcellularLocation>
</comment>
<comment type="domain">
    <text evidence="1">Neither C2 domains mediates Ca(2+)-dependent or Ca(2+)-independent phospholipid binding.</text>
</comment>
<comment type="similarity">
    <text evidence="4">Belongs to the synaptotagmin family.</text>
</comment>
<feature type="chain" id="PRO_0000183982" description="Synaptotagmin-15">
    <location>
        <begin position="1"/>
        <end position="422"/>
    </location>
</feature>
<feature type="topological domain" description="Extracellular" evidence="1">
    <location>
        <begin position="1"/>
        <end position="4"/>
    </location>
</feature>
<feature type="transmembrane region" description="Helical; Signal-anchor for type III membrane protein" evidence="2">
    <location>
        <begin position="5"/>
        <end position="27"/>
    </location>
</feature>
<feature type="topological domain" description="Cytoplasmic" evidence="2">
    <location>
        <begin position="28"/>
        <end position="422"/>
    </location>
</feature>
<feature type="domain" description="C2 1" evidence="3">
    <location>
        <begin position="148"/>
        <end position="267"/>
    </location>
</feature>
<feature type="domain" description="C2 2" evidence="3">
    <location>
        <begin position="279"/>
        <end position="400"/>
    </location>
</feature>
<proteinExistence type="evidence at transcript level"/>
<gene>
    <name type="primary">Syt15</name>
    <name type="synonym">Sytxv</name>
</gene>
<protein>
    <recommendedName>
        <fullName>Synaptotagmin-15</fullName>
    </recommendedName>
    <alternativeName>
        <fullName>Synaptotagmin XV</fullName>
        <shortName>SytXV</shortName>
    </alternativeName>
</protein>
<evidence type="ECO:0000250" key="1"/>
<evidence type="ECO:0000255" key="2"/>
<evidence type="ECO:0000255" key="3">
    <source>
        <dbReference type="PROSITE-ProRule" id="PRU00041"/>
    </source>
</evidence>
<evidence type="ECO:0000305" key="4"/>
<keyword id="KW-0472">Membrane</keyword>
<keyword id="KW-1185">Reference proteome</keyword>
<keyword id="KW-0677">Repeat</keyword>
<keyword id="KW-0735">Signal-anchor</keyword>
<keyword id="KW-0812">Transmembrane</keyword>
<keyword id="KW-1133">Transmembrane helix</keyword>
<name>SYT15_RAT</name>
<sequence>MAEQLALVIGCIIGGLLLLIGISCCLWKRLCTTFTYEELPETADTATSSSFSKKEERPCRYAGIPSVRLPSVPFVVPPSHQGRDWVRLHGGDWAVAPQDPCPVPEHITCTSSPAAGQTSLPLCVMGSINPELYKSSEDVSEAGFPDGCLGRLWFSVEYQQESERLLVDLIKAQHLQVPAETCSTLVKLHLLPDKRRFLQSKAKRKTCNPQFDESFIFQVSSKSVAQRVLKFSVYHINKQRKHQLLGQVLFPLKNETLAGDRHRVIWRDLEAENLEPLSEFGDLQFCLSYNDYLSRLTVVVLRAKGLQLQEDRGVVSVFVKVSLMNHNKFVKCKRTSAVLGSVNPVYNETFSFKADANELDTASLSLVVLQITEGDKSYPLGRVVVGPYMYTRGKELEHWNEMLRKPKELVKRWHALCRPMEP</sequence>
<accession>P59926</accession>